<feature type="signal peptide" evidence="6">
    <location>
        <begin position="1"/>
        <end position="19"/>
    </location>
</feature>
<feature type="chain" id="PRO_0000015560" description="Interleukin-5">
    <location>
        <begin position="20"/>
        <end position="134"/>
    </location>
</feature>
<feature type="site" description="Not glycosylated" evidence="6">
    <location>
        <position position="90"/>
    </location>
</feature>
<feature type="glycosylation site" description="O-linked (GalNAc...) threonine" evidence="6">
    <location>
        <position position="22"/>
    </location>
</feature>
<feature type="glycosylation site" description="N-linked (GlcNAc...) asparagine" evidence="14">
    <location>
        <position position="47"/>
    </location>
</feature>
<feature type="disulfide bond" description="Interchain (with C-105)" evidence="3 5">
    <location>
        <position position="63"/>
    </location>
</feature>
<feature type="disulfide bond" description="Interchain (with C-63)" evidence="3 5">
    <location>
        <position position="105"/>
    </location>
</feature>
<feature type="splice variant" id="VSP_062346" description="In isoform 2." evidence="8">
    <location>
        <begin position="49"/>
        <end position="59"/>
    </location>
</feature>
<feature type="sequence conflict" description="In Ref. 6; CAA31210." evidence="13" ref="6">
    <original>F</original>
    <variation>L</variation>
    <location>
        <position position="88"/>
    </location>
</feature>
<feature type="helix" evidence="18">
    <location>
        <begin position="26"/>
        <end position="39"/>
    </location>
</feature>
<feature type="helix" evidence="18">
    <location>
        <begin position="41"/>
        <end position="45"/>
    </location>
</feature>
<feature type="strand" evidence="18">
    <location>
        <begin position="51"/>
        <end position="54"/>
    </location>
</feature>
<feature type="strand" evidence="18">
    <location>
        <begin position="56"/>
        <end position="58"/>
    </location>
</feature>
<feature type="helix" evidence="18">
    <location>
        <begin position="60"/>
        <end position="62"/>
    </location>
</feature>
<feature type="helix" evidence="18">
    <location>
        <begin position="64"/>
        <end position="75"/>
    </location>
</feature>
<feature type="helix" evidence="18">
    <location>
        <begin position="84"/>
        <end position="103"/>
    </location>
</feature>
<feature type="strand" evidence="18">
    <location>
        <begin position="106"/>
        <end position="111"/>
    </location>
</feature>
<feature type="helix" evidence="18">
    <location>
        <begin position="112"/>
        <end position="128"/>
    </location>
</feature>
<name>IL5_HUMAN</name>
<reference key="1">
    <citation type="journal article" date="1986" name="Nucleic Acids Res.">
        <title>Cloning of cDNA for human T-cell replacing factor (interleukin-5) and comparison with the murine homologue.</title>
        <authorList>
            <person name="Azuma C."/>
            <person name="Tanabe T."/>
            <person name="Konishi M."/>
            <person name="Kinashi T."/>
            <person name="Noma T."/>
            <person name="Matsuda F."/>
            <person name="Yaoita Y."/>
            <person name="Takatsu K."/>
            <person name="Hammarstroem L."/>
            <person name="Smith C.I.E."/>
            <person name="Severinson E."/>
            <person name="Honjo T."/>
        </authorList>
    </citation>
    <scope>NUCLEOTIDE SEQUENCE [MRNA] (ISOFORM 1)</scope>
</reference>
<reference key="2">
    <citation type="journal article" date="1987" name="J. Biol. Chem.">
        <title>Molecular cloning and structure of the human interleukin-5 gene.</title>
        <authorList>
            <person name="Tanabe T."/>
            <person name="Konishi M."/>
            <person name="Mizuta T."/>
            <person name="Noma T."/>
            <person name="Honjo T."/>
        </authorList>
    </citation>
    <scope>NUCLEOTIDE SEQUENCE [GENOMIC DNA] (ISOFORM 1)</scope>
</reference>
<reference key="3">
    <citation type="journal article" date="1987" name="Proc. Natl. Acad. Sci. U.S.A.">
        <title>Molecular cloning, nucleotide sequence, and expression of the gene encoding human eosinophil differentiation factor (interleukin 5).</title>
        <authorList>
            <person name="Campbell H.D."/>
            <person name="Tucker W.Q.J."/>
            <person name="Hort Y."/>
            <person name="Martinson M.E."/>
            <person name="Mayo G."/>
            <person name="Clutterbuck E.J."/>
            <person name="Sanderson C.J."/>
            <person name="Young I.G."/>
        </authorList>
    </citation>
    <scope>NUCLEOTIDE SEQUENCE [GENOMIC DNA] (ISOFORM 1)</scope>
</reference>
<reference key="4">
    <citation type="journal article" date="1987" name="Proc. Natl. Acad. Sci. U.S.A.">
        <title>Isolation and characterization of lymphokine cDNA clones encoding mouse and human IgA-enhancing factor and eosinophil colony-stimulating factor activities: relationship to interleukin 5.</title>
        <authorList>
            <person name="Yokota T."/>
            <person name="Coffman R.L."/>
            <person name="Hagiwara H."/>
            <person name="Rennick D.M."/>
            <person name="Takebe Y."/>
            <person name="Yokota K."/>
            <person name="Gemmell L."/>
            <person name="Shrader B."/>
            <person name="Yang G."/>
            <person name="Meyerson P."/>
            <person name="Luh J."/>
            <person name="Hoy P."/>
            <person name="Pene J."/>
            <person name="Briere F."/>
            <person name="Spits H."/>
            <person name="Banchereau J."/>
            <person name="de Vries J."/>
            <person name="Lee F.D."/>
            <person name="Arai N."/>
            <person name="Arai K."/>
        </authorList>
    </citation>
    <scope>NUCLEOTIDE SEQUENCE [MRNA] (ISOFORM 1)</scope>
</reference>
<reference key="5">
    <citation type="journal article" date="2020" name="Heliyon">
        <title>Identification of a novel splice variant for mouse and human interleukin-5.</title>
        <authorList>
            <person name="Shilovskiy I."/>
            <person name="Andreev S."/>
            <person name="Mazurov D."/>
            <person name="Barvinskaia E."/>
            <person name="Bolotova S."/>
            <person name="Nikolskii A."/>
            <person name="Sergeev I."/>
            <person name="Maerle A."/>
            <person name="Kudlay D."/>
            <person name="Khaitov M."/>
        </authorList>
    </citation>
    <scope>NUCLEOTIDE SEQUENCE [MRNA] (ISOFORM 2)</scope>
    <scope>ALTERNATIVE SPLICING</scope>
    <scope>TISSUE SPECIFICITY</scope>
</reference>
<reference key="6">
    <citation type="submission" date="1992-02" db="EMBL/GenBank/DDBJ databases">
        <authorList>
            <person name="Honjo T."/>
            <person name="Takatsu K."/>
            <person name="Severinson E."/>
        </authorList>
    </citation>
    <scope>NUCLEOTIDE SEQUENCE [GENOMIC DNA / MRNA] (ISOFORM 1)</scope>
</reference>
<reference key="7">
    <citation type="submission" date="2001-02" db="EMBL/GenBank/DDBJ databases">
        <authorList>
            <consortium name="SeattleSNPs variation discovery resource"/>
        </authorList>
    </citation>
    <scope>NUCLEOTIDE SEQUENCE [GENOMIC DNA] (ISOFORM 1)</scope>
</reference>
<reference key="8">
    <citation type="journal article" date="2004" name="Genome Res.">
        <title>The status, quality, and expansion of the NIH full-length cDNA project: the Mammalian Gene Collection (MGC).</title>
        <authorList>
            <consortium name="The MGC Project Team"/>
        </authorList>
    </citation>
    <scope>NUCLEOTIDE SEQUENCE [LARGE SCALE MRNA] (ISOFORM 1)</scope>
</reference>
<reference key="9">
    <citation type="journal article" date="1989" name="Blood">
        <title>Human interleukin-5 (IL-5) regulates the production of eosinophils in human bone marrow cultures: comparison and interaction with IL-1, IL-3, IL-6, and GMCSF.</title>
        <authorList>
            <person name="Clutterbuck E.J."/>
            <person name="Hirst E.M."/>
            <person name="Sanderson C.J."/>
        </authorList>
    </citation>
    <scope>FUNCTION</scope>
    <scope>SUBCELLULAR LOCATION</scope>
</reference>
<reference key="10">
    <citation type="journal article" date="1990" name="J. Biochem.">
        <title>Structure of recombinant human interleukin 5 produced by Chinese hamster ovary cells.</title>
        <authorList>
            <person name="Minamitake Y."/>
            <person name="Kodama S."/>
            <person name="Katayama T."/>
            <person name="Adachi H."/>
            <person name="Tanaka S."/>
            <person name="Tsujimoto M."/>
        </authorList>
    </citation>
    <scope>PROTEIN SEQUENCE OF 20-134</scope>
    <scope>DISULFIDE BONDS</scope>
    <scope>GLYCOSYLATION AT THR-22 AND ASN-47</scope>
    <scope>LACK OF GLYCOSYLATION AT ASN-90</scope>
</reference>
<reference key="11">
    <citation type="journal article" date="1991" name="FEBS Lett.">
        <title>Human interleukin-5 expressed in Escherichia coli: assignment of the disulfide bridges of the purified unglycosylated protein.</title>
        <authorList>
            <person name="Proudfoot A.E.I."/>
            <person name="Davies J.G."/>
            <person name="Turcatti G."/>
            <person name="Wingfield P.T."/>
        </authorList>
    </citation>
    <scope>DISULFIDE BONDS</scope>
</reference>
<reference key="12">
    <citation type="journal article" date="1992" name="Proc. Natl. Acad. Sci. U.S.A.">
        <title>Molecular basis of the membrane-anchored and two soluble isoforms of the human interleukin 5 receptor alpha subunit.</title>
        <authorList>
            <person name="Tavernier J."/>
            <person name="Tuypens T."/>
            <person name="Plaetinck G."/>
            <person name="Verhee A."/>
            <person name="Fiers W."/>
            <person name="Devos R."/>
        </authorList>
    </citation>
    <scope>FUNCTION</scope>
    <scope>INTERACTION WITH IL5RA AND CSF2RB</scope>
</reference>
<reference key="13">
    <citation type="journal article" date="1995" name="Int. Arch. Allergy Immunol.">
        <title>The interleukin-5/receptor interaction activates Lyn and Jak2 tyrosine kinases and propagates signals via the Ras-Raf-1-MAP kinase and the Jak-STAT pathways in eosinophils.</title>
        <authorList>
            <person name="Alam R."/>
            <person name="Pazdrak K."/>
            <person name="Stafford S."/>
            <person name="Forsythe P."/>
        </authorList>
    </citation>
    <scope>FUNCTION</scope>
</reference>
<reference key="14">
    <citation type="journal article" date="1997" name="Clin. Exp. Immunol.">
        <title>IL-5 but not interferon-gamma (IFN-gamma) inhibits eosinophil apoptosis by up-regulation of bcl-2 expression.</title>
        <authorList>
            <person name="Ochiai K."/>
            <person name="Kagami M."/>
            <person name="Matsumura R."/>
            <person name="Tomioka H."/>
        </authorList>
    </citation>
    <scope>FUNCTION</scope>
</reference>
<reference evidence="15" key="15">
    <citation type="journal article" date="1993" name="Nature">
        <title>A novel dimer configuration revealed by the crystal structure at 2.4-A resolution of human interleukin-5.</title>
        <authorList>
            <person name="Milburn M.V."/>
            <person name="Hassell A.M."/>
            <person name="Lambert M.H."/>
            <person name="Jordan S.R."/>
            <person name="Proudfoot A.E.I."/>
            <person name="Graber P."/>
            <person name="Wells T.N.C."/>
        </authorList>
    </citation>
    <scope>X-RAY CRYSTALLOGRAPHY (2.4 ANGSTROMS) OF 24-131</scope>
    <scope>DISULFIDE BONDS</scope>
    <scope>SUBUNIT</scope>
</reference>
<reference evidence="16" key="16">
    <citation type="journal article" date="2011" name="Structure">
        <title>Structure analysis of the IL-5 ligand-receptor complex reveals a wrench-like architecture for IL-5Ralpha.</title>
        <authorList>
            <person name="Patino E."/>
            <person name="Kotzsch A."/>
            <person name="Saremba S."/>
            <person name="Nickel J."/>
            <person name="Schmitz W."/>
            <person name="Sebald W."/>
            <person name="Mueller T.D."/>
        </authorList>
    </citation>
    <scope>X-RAY CRYSTALLOGRAPHY (2.55 ANGSTROMS) OF 22-131 IN COMPLEX WITH IL5RA</scope>
    <scope>DISULFIDE BONDS</scope>
</reference>
<reference evidence="17" key="17">
    <citation type="journal article" date="2012" name="Protein Sci.">
        <title>Structural basis of interleukin-5 dimer recognition by its alpha receptor.</title>
        <authorList>
            <person name="Kusano S."/>
            <person name="Kukimoto-Niino M."/>
            <person name="Hino N."/>
            <person name="Ohsawa N."/>
            <person name="Ikutani M."/>
            <person name="Takaki S."/>
            <person name="Sakamoto K."/>
            <person name="Hara-Yokoyama M."/>
            <person name="Shirouzu M."/>
            <person name="Takatsu K."/>
            <person name="Yokoyama S."/>
        </authorList>
    </citation>
    <scope>X-RAY CRYSTALLOGRAPHY (2.70 ANGSTROMS) OF 24-130 IN COMPLEX WITH IL5RA</scope>
    <scope>DISULFIDE BONDS</scope>
    <scope>SUBUNIT</scope>
    <scope>FUNCTION</scope>
</reference>
<protein>
    <recommendedName>
        <fullName>Interleukin-5</fullName>
        <shortName>IL-5</shortName>
    </recommendedName>
    <alternativeName>
        <fullName>B-cell differentiation factor I</fullName>
    </alternativeName>
    <alternativeName>
        <fullName>Eosinophil differentiation factor</fullName>
    </alternativeName>
    <alternativeName>
        <fullName>T-cell replacing factor</fullName>
        <shortName>TRF</shortName>
    </alternativeName>
</protein>
<sequence>MRMLLHLSLLALGAAYVYAIPTEIPTSALVKETLALLSTHRTLLIANETLRIPVPVHKNHQLCTEEIFQGIGTLESQTVQGGTVERLFKNLSLIKKYIDGQKKKCGEERRRVNQFLDYLQEFLGVMNTEWIIES</sequence>
<gene>
    <name type="primary">IL5</name>
</gene>
<accession>P05113</accession>
<accession>Q13840</accession>
<comment type="function">
    <text evidence="1 2 5 7 9 11">Homodimeric cytokine expressed predominantly by T-lymphocytes and NK cells that plays an important role in the survival, differentiation, and chemotaxis of eosinophils (PubMed:2653458, PubMed:9010276). Also acts on activated and resting B-cells to induce immunoglobulin production, growth, and differentiation (By similarity). Mechanistically, exerts its biological effects through a receptor composed of IL5RA subunit and the cytokine receptor common subunit beta/CSF2RB (PubMed:1495999, PubMed:22528658). Binding to the receptor leads to activation of various kinases including LYN, SYK and JAK2 and thereby propagates signals through the RAS-MAPK and JAK-STAT5 pathways respectively (PubMed:7613138).</text>
</comment>
<comment type="subunit">
    <text evidence="2 4 5 10">Homodimer; disulfide-linked (PubMed:22528658, PubMed:8483502). Interacts with IL5RA (PubMed:1495999, PubMed:22153509). Interacts with CSF2RB (PubMed:1495999).</text>
</comment>
<comment type="interaction">
    <interactant intactId="EBI-2435811">
        <id>P05113</id>
    </interactant>
    <interactant intactId="EBI-1809771">
        <id>P32927</id>
        <label>CSF2RB</label>
    </interactant>
    <organismsDiffer>false</organismsDiffer>
    <experiments>2</experiments>
</comment>
<comment type="interaction">
    <interactant intactId="EBI-2435811">
        <id>P05113</id>
    </interactant>
    <interactant intactId="EBI-1759442">
        <id>Q01344</id>
        <label>IL5RA</label>
    </interactant>
    <organismsDiffer>false</organismsDiffer>
    <experiments>2</experiments>
</comment>
<comment type="interaction">
    <interactant intactId="EBI-2435811">
        <id>P05113</id>
    </interactant>
    <interactant intactId="EBI-15957545">
        <id>Q01344-2</id>
        <label>IL5RA</label>
    </interactant>
    <organismsDiffer>false</organismsDiffer>
    <experiments>4</experiments>
</comment>
<comment type="subcellular location">
    <subcellularLocation>
        <location evidence="7">Secreted</location>
    </subcellularLocation>
</comment>
<comment type="alternative products">
    <event type="alternative splicing"/>
    <isoform>
        <id>P05113-1</id>
        <name>1</name>
        <sequence type="displayed"/>
    </isoform>
    <isoform>
        <id>P05113-2</id>
        <name>2</name>
        <name evidence="12">delta2</name>
        <name evidence="12">hIL-5delta2</name>
        <sequence type="described" ref="VSP_062346"/>
    </isoform>
</comment>
<comment type="tissue specificity">
    <text evidence="8">Present in peripheral blood mononuclear cells.</text>
</comment>
<comment type="similarity">
    <text evidence="13">Belongs to the IL-5 family.</text>
</comment>
<comment type="online information" name="Wikipedia">
    <link uri="https://en.wikipedia.org/wiki/Interleukin_5"/>
    <text>Interleukin-5 entry</text>
</comment>
<keyword id="KW-0002">3D-structure</keyword>
<keyword id="KW-0025">Alternative splicing</keyword>
<keyword id="KW-0202">Cytokine</keyword>
<keyword id="KW-0903">Direct protein sequencing</keyword>
<keyword id="KW-1015">Disulfide bond</keyword>
<keyword id="KW-0325">Glycoprotein</keyword>
<keyword id="KW-0339">Growth factor</keyword>
<keyword id="KW-1185">Reference proteome</keyword>
<keyword id="KW-0964">Secreted</keyword>
<keyword id="KW-0732">Signal</keyword>
<dbReference type="EMBL" id="X04688">
    <property type="protein sequence ID" value="CAA28390.1"/>
    <property type="molecule type" value="mRNA"/>
</dbReference>
<dbReference type="EMBL" id="J03478">
    <property type="protein sequence ID" value="AAA74469.1"/>
    <property type="molecule type" value="Genomic_DNA"/>
</dbReference>
<dbReference type="EMBL" id="J02971">
    <property type="protein sequence ID" value="AAA98620.1"/>
    <property type="molecule type" value="Genomic_DNA"/>
</dbReference>
<dbReference type="EMBL" id="X12705">
    <property type="protein sequence ID" value="CAA31210.1"/>
    <property type="molecule type" value="mRNA"/>
</dbReference>
<dbReference type="EMBL" id="X12706">
    <property type="protein sequence ID" value="CAA31211.1"/>
    <property type="molecule type" value="Genomic_DNA"/>
</dbReference>
<dbReference type="EMBL" id="AF353265">
    <property type="protein sequence ID" value="AAK19759.1"/>
    <property type="molecule type" value="Genomic_DNA"/>
</dbReference>
<dbReference type="EMBL" id="BC066282">
    <property type="protein sequence ID" value="AAH66282.1"/>
    <property type="molecule type" value="mRNA"/>
</dbReference>
<dbReference type="CCDS" id="CCDS4156.1">
    <molecule id="P05113-1"/>
</dbReference>
<dbReference type="PIR" id="A28477">
    <property type="entry name" value="A28477"/>
</dbReference>
<dbReference type="RefSeq" id="NP_000870.1">
    <molecule id="P05113-1"/>
    <property type="nucleotide sequence ID" value="NM_000879.3"/>
</dbReference>
<dbReference type="RefSeq" id="XP_011541675.1">
    <molecule id="P05113-1"/>
    <property type="nucleotide sequence ID" value="XM_011543373.4"/>
</dbReference>
<dbReference type="RefSeq" id="XP_011541676.1">
    <property type="nucleotide sequence ID" value="XM_011543374.2"/>
</dbReference>
<dbReference type="RefSeq" id="XP_054208494.1">
    <molecule id="P05113-1"/>
    <property type="nucleotide sequence ID" value="XM_054352519.1"/>
</dbReference>
<dbReference type="RefSeq" id="XP_054208495.1">
    <molecule id="P05113-1"/>
    <property type="nucleotide sequence ID" value="XM_054352520.1"/>
</dbReference>
<dbReference type="PDB" id="1HUL">
    <property type="method" value="X-ray"/>
    <property type="resolution" value="2.40 A"/>
    <property type="chains" value="A/B=24-131"/>
</dbReference>
<dbReference type="PDB" id="3QT2">
    <property type="method" value="X-ray"/>
    <property type="resolution" value="2.55 A"/>
    <property type="chains" value="C/D/E/F=19-134"/>
</dbReference>
<dbReference type="PDB" id="3VA2">
    <property type="method" value="X-ray"/>
    <property type="resolution" value="2.70 A"/>
    <property type="chains" value="A/B=23-134"/>
</dbReference>
<dbReference type="PDB" id="8TLD">
    <property type="method" value="EM"/>
    <property type="resolution" value="3.60 A"/>
    <property type="chains" value="C/D=20-134"/>
</dbReference>
<dbReference type="PDBsum" id="1HUL"/>
<dbReference type="PDBsum" id="3QT2"/>
<dbReference type="PDBsum" id="3VA2"/>
<dbReference type="PDBsum" id="8TLD"/>
<dbReference type="EMDB" id="EMD-41367"/>
<dbReference type="SMR" id="P05113"/>
<dbReference type="BioGRID" id="109781">
    <property type="interactions" value="4"/>
</dbReference>
<dbReference type="ComplexPortal" id="CPX-500">
    <property type="entry name" value="Interleukin-5 complex"/>
</dbReference>
<dbReference type="ComplexPortal" id="CPX-506">
    <property type="entry name" value="Interleukin-5 receptor-ligand complex"/>
</dbReference>
<dbReference type="CORUM" id="P05113"/>
<dbReference type="DIP" id="DIP-28N"/>
<dbReference type="FunCoup" id="P05113">
    <property type="interactions" value="723"/>
</dbReference>
<dbReference type="IntAct" id="P05113">
    <property type="interactions" value="2"/>
</dbReference>
<dbReference type="STRING" id="9606.ENSP00000231454"/>
<dbReference type="BindingDB" id="P05113"/>
<dbReference type="ChEMBL" id="CHEMBL1169600"/>
<dbReference type="DrugBank" id="DB06612">
    <property type="generic name" value="Mepolizumab"/>
</dbReference>
<dbReference type="DrugBank" id="DB01411">
    <property type="generic name" value="Pranlukast"/>
</dbReference>
<dbReference type="DrugBank" id="DB06602">
    <property type="generic name" value="Reslizumab"/>
</dbReference>
<dbReference type="DrugCentral" id="P05113"/>
<dbReference type="GlyCosmos" id="P05113">
    <property type="glycosylation" value="2 sites, No reported glycans"/>
</dbReference>
<dbReference type="GlyGen" id="P05113">
    <property type="glycosylation" value="2 sites"/>
</dbReference>
<dbReference type="iPTMnet" id="P05113"/>
<dbReference type="PhosphoSitePlus" id="P05113"/>
<dbReference type="BioMuta" id="IL5"/>
<dbReference type="DMDM" id="124341"/>
<dbReference type="PaxDb" id="9606-ENSP00000231454"/>
<dbReference type="PeptideAtlas" id="P05113"/>
<dbReference type="ABCD" id="P05113">
    <property type="antibodies" value="12 sequenced antibodies"/>
</dbReference>
<dbReference type="Antibodypedia" id="4146">
    <property type="antibodies" value="929 antibodies from 44 providers"/>
</dbReference>
<dbReference type="DNASU" id="3567"/>
<dbReference type="Ensembl" id="ENST00000231454.6">
    <molecule id="P05113-1"/>
    <property type="protein sequence ID" value="ENSP00000231454.1"/>
    <property type="gene ID" value="ENSG00000113525.10"/>
</dbReference>
<dbReference type="GeneID" id="3567"/>
<dbReference type="KEGG" id="hsa:3567"/>
<dbReference type="MANE-Select" id="ENST00000231454.6">
    <property type="protein sequence ID" value="ENSP00000231454.1"/>
    <property type="RefSeq nucleotide sequence ID" value="NM_000879.3"/>
    <property type="RefSeq protein sequence ID" value="NP_000870.1"/>
</dbReference>
<dbReference type="UCSC" id="uc003kxe.1">
    <molecule id="P05113-1"/>
    <property type="organism name" value="human"/>
</dbReference>
<dbReference type="AGR" id="HGNC:6016"/>
<dbReference type="CTD" id="3567"/>
<dbReference type="DisGeNET" id="3567"/>
<dbReference type="GeneCards" id="IL5"/>
<dbReference type="HGNC" id="HGNC:6016">
    <property type="gene designation" value="IL5"/>
</dbReference>
<dbReference type="HPA" id="ENSG00000113525">
    <property type="expression patterns" value="Tissue enriched (testis)"/>
</dbReference>
<dbReference type="MalaCards" id="IL5"/>
<dbReference type="MIM" id="147850">
    <property type="type" value="gene"/>
</dbReference>
<dbReference type="neXtProt" id="NX_P05113"/>
<dbReference type="OpenTargets" id="ENSG00000113525"/>
<dbReference type="PharmGKB" id="PA29833"/>
<dbReference type="VEuPathDB" id="HostDB:ENSG00000113525"/>
<dbReference type="eggNOG" id="ENOG502RWD8">
    <property type="taxonomic scope" value="Eukaryota"/>
</dbReference>
<dbReference type="GeneTree" id="ENSGT00390000016991"/>
<dbReference type="HOGENOM" id="CLU_156269_0_0_1"/>
<dbReference type="InParanoid" id="P05113"/>
<dbReference type="OMA" id="VPTHKNH"/>
<dbReference type="OrthoDB" id="9446172at2759"/>
<dbReference type="PAN-GO" id="P05113">
    <property type="GO annotations" value="1 GO annotation based on evolutionary models"/>
</dbReference>
<dbReference type="PhylomeDB" id="P05113"/>
<dbReference type="TreeFam" id="TF338422"/>
<dbReference type="PathwayCommons" id="P05113"/>
<dbReference type="Reactome" id="R-HSA-512988">
    <property type="pathway name" value="Interleukin-3, Interleukin-5 and GM-CSF signaling"/>
</dbReference>
<dbReference type="Reactome" id="R-HSA-5673001">
    <property type="pathway name" value="RAF/MAP kinase cascade"/>
</dbReference>
<dbReference type="Reactome" id="R-HSA-912526">
    <property type="pathway name" value="Interleukin receptor SHC signaling"/>
</dbReference>
<dbReference type="SignaLink" id="P05113"/>
<dbReference type="SIGNOR" id="P05113"/>
<dbReference type="BioGRID-ORCS" id="3567">
    <property type="hits" value="8 hits in 1146 CRISPR screens"/>
</dbReference>
<dbReference type="ChiTaRS" id="IL5">
    <property type="organism name" value="human"/>
</dbReference>
<dbReference type="EvolutionaryTrace" id="P05113"/>
<dbReference type="GeneWiki" id="Interleukin_5"/>
<dbReference type="GenomeRNAi" id="3567"/>
<dbReference type="Pharos" id="P05113">
    <property type="development level" value="Tclin"/>
</dbReference>
<dbReference type="PRO" id="PR:P05113"/>
<dbReference type="Proteomes" id="UP000005640">
    <property type="component" value="Chromosome 5"/>
</dbReference>
<dbReference type="RNAct" id="P05113">
    <property type="molecule type" value="protein"/>
</dbReference>
<dbReference type="Bgee" id="ENSG00000113525">
    <property type="expression patterns" value="Expressed in right testis and 109 other cell types or tissues"/>
</dbReference>
<dbReference type="ExpressionAtlas" id="P05113">
    <property type="expression patterns" value="baseline and differential"/>
</dbReference>
<dbReference type="GO" id="GO:0005576">
    <property type="term" value="C:extracellular region"/>
    <property type="evidence" value="ECO:0000314"/>
    <property type="project" value="BHF-UCL"/>
</dbReference>
<dbReference type="GO" id="GO:0005615">
    <property type="term" value="C:extracellular space"/>
    <property type="evidence" value="ECO:0000314"/>
    <property type="project" value="UniProt"/>
</dbReference>
<dbReference type="GO" id="GO:0005125">
    <property type="term" value="F:cytokine activity"/>
    <property type="evidence" value="ECO:0000314"/>
    <property type="project" value="UniProt"/>
</dbReference>
<dbReference type="GO" id="GO:0008083">
    <property type="term" value="F:growth factor activity"/>
    <property type="evidence" value="ECO:0007669"/>
    <property type="project" value="UniProtKB-KW"/>
</dbReference>
<dbReference type="GO" id="GO:0005137">
    <property type="term" value="F:interleukin-5 receptor binding"/>
    <property type="evidence" value="ECO:0000304"/>
    <property type="project" value="ProtInc"/>
</dbReference>
<dbReference type="GO" id="GO:0006955">
    <property type="term" value="P:immune response"/>
    <property type="evidence" value="ECO:0007669"/>
    <property type="project" value="InterPro"/>
</dbReference>
<dbReference type="GO" id="GO:0006954">
    <property type="term" value="P:inflammatory response"/>
    <property type="evidence" value="ECO:0000304"/>
    <property type="project" value="ProtInc"/>
</dbReference>
<dbReference type="GO" id="GO:0038043">
    <property type="term" value="P:interleukin-5-mediated signaling pathway"/>
    <property type="evidence" value="ECO:0000314"/>
    <property type="project" value="UniProt"/>
</dbReference>
<dbReference type="GO" id="GO:0030890">
    <property type="term" value="P:positive regulation of B cell proliferation"/>
    <property type="evidence" value="ECO:0007669"/>
    <property type="project" value="Ensembl"/>
</dbReference>
<dbReference type="GO" id="GO:0045893">
    <property type="term" value="P:positive regulation of DNA-templated transcription"/>
    <property type="evidence" value="ECO:0007669"/>
    <property type="project" value="Ensembl"/>
</dbReference>
<dbReference type="GO" id="GO:0045645">
    <property type="term" value="P:positive regulation of eosinophil differentiation"/>
    <property type="evidence" value="ECO:0007669"/>
    <property type="project" value="Ensembl"/>
</dbReference>
<dbReference type="GO" id="GO:0002639">
    <property type="term" value="P:positive regulation of immunoglobulin production"/>
    <property type="evidence" value="ECO:0007669"/>
    <property type="project" value="Ensembl"/>
</dbReference>
<dbReference type="GO" id="GO:0071803">
    <property type="term" value="P:positive regulation of podosome assembly"/>
    <property type="evidence" value="ECO:0000314"/>
    <property type="project" value="BHF-UCL"/>
</dbReference>
<dbReference type="GO" id="GO:0046427">
    <property type="term" value="P:positive regulation of receptor signaling pathway via JAK-STAT"/>
    <property type="evidence" value="ECO:0007669"/>
    <property type="project" value="Ensembl"/>
</dbReference>
<dbReference type="FunFam" id="1.20.1250.10:FF:000034">
    <property type="entry name" value="Interleukin-5"/>
    <property type="match status" value="1"/>
</dbReference>
<dbReference type="Gene3D" id="1.20.1250.10">
    <property type="match status" value="1"/>
</dbReference>
<dbReference type="InterPro" id="IPR009079">
    <property type="entry name" value="4_helix_cytokine-like_core"/>
</dbReference>
<dbReference type="InterPro" id="IPR000186">
    <property type="entry name" value="IL-5"/>
</dbReference>
<dbReference type="PANTHER" id="PTHR48491">
    <property type="entry name" value="INTERLEUKIN-5"/>
    <property type="match status" value="1"/>
</dbReference>
<dbReference type="PANTHER" id="PTHR48491:SF1">
    <property type="entry name" value="INTERLEUKIN-5"/>
    <property type="match status" value="1"/>
</dbReference>
<dbReference type="Pfam" id="PF02025">
    <property type="entry name" value="IL5"/>
    <property type="match status" value="1"/>
</dbReference>
<dbReference type="PRINTS" id="PR00432">
    <property type="entry name" value="INTERLEUKIN5"/>
</dbReference>
<dbReference type="SUPFAM" id="SSF47266">
    <property type="entry name" value="4-helical cytokines"/>
    <property type="match status" value="1"/>
</dbReference>
<evidence type="ECO:0000250" key="1">
    <source>
        <dbReference type="UniProtKB" id="P04401"/>
    </source>
</evidence>
<evidence type="ECO:0000269" key="2">
    <source>
    </source>
</evidence>
<evidence type="ECO:0000269" key="3">
    <source>
    </source>
</evidence>
<evidence type="ECO:0000269" key="4">
    <source>
    </source>
</evidence>
<evidence type="ECO:0000269" key="5">
    <source>
    </source>
</evidence>
<evidence type="ECO:0000269" key="6">
    <source>
    </source>
</evidence>
<evidence type="ECO:0000269" key="7">
    <source>
    </source>
</evidence>
<evidence type="ECO:0000269" key="8">
    <source>
    </source>
</evidence>
<evidence type="ECO:0000269" key="9">
    <source>
    </source>
</evidence>
<evidence type="ECO:0000269" key="10">
    <source>
    </source>
</evidence>
<evidence type="ECO:0000269" key="11">
    <source>
    </source>
</evidence>
<evidence type="ECO:0000303" key="12">
    <source>
    </source>
</evidence>
<evidence type="ECO:0000305" key="13"/>
<evidence type="ECO:0000305" key="14">
    <source>
    </source>
</evidence>
<evidence type="ECO:0007744" key="15">
    <source>
        <dbReference type="PDB" id="1HUL"/>
    </source>
</evidence>
<evidence type="ECO:0007744" key="16">
    <source>
        <dbReference type="PDB" id="3QT2"/>
    </source>
</evidence>
<evidence type="ECO:0007744" key="17">
    <source>
        <dbReference type="PDB" id="3VA2"/>
    </source>
</evidence>
<evidence type="ECO:0007829" key="18">
    <source>
        <dbReference type="PDB" id="1HUL"/>
    </source>
</evidence>
<organism>
    <name type="scientific">Homo sapiens</name>
    <name type="common">Human</name>
    <dbReference type="NCBI Taxonomy" id="9606"/>
    <lineage>
        <taxon>Eukaryota</taxon>
        <taxon>Metazoa</taxon>
        <taxon>Chordata</taxon>
        <taxon>Craniata</taxon>
        <taxon>Vertebrata</taxon>
        <taxon>Euteleostomi</taxon>
        <taxon>Mammalia</taxon>
        <taxon>Eutheria</taxon>
        <taxon>Euarchontoglires</taxon>
        <taxon>Primates</taxon>
        <taxon>Haplorrhini</taxon>
        <taxon>Catarrhini</taxon>
        <taxon>Hominidae</taxon>
        <taxon>Homo</taxon>
    </lineage>
</organism>
<proteinExistence type="evidence at protein level"/>